<keyword id="KW-0012">Acyltransferase</keyword>
<keyword id="KW-0016">Alginate biosynthesis</keyword>
<keyword id="KW-1015">Disulfide bond</keyword>
<keyword id="KW-0574">Periplasm</keyword>
<keyword id="KW-0732">Signal</keyword>
<keyword id="KW-0808">Transferase</keyword>
<comment type="function">
    <text evidence="1">Plays two roles in the biosynthesis of the exopolysaccharide alginate: protects alginate from degradation as the polymer traverses the periplasm, and also plays a role in its O-acetylation. Probably has acetyltransferase activity in vivo (By similarity).</text>
</comment>
<comment type="pathway">
    <text>Glycan biosynthesis; alginate biosynthesis.</text>
</comment>
<comment type="subunit">
    <text evidence="1">Monomer.</text>
</comment>
<comment type="subcellular location">
    <subcellularLocation>
        <location evidence="1">Periplasm</location>
    </subcellularLocation>
</comment>
<comment type="domain">
    <text evidence="1">Consists of two domains, with an N-terminal domain with structural homology to members of the SGNH (GDSL) hydrolase superfamily and a C-terminal carbohydrate-binding module (CBM) that may bind alginate.</text>
</comment>
<comment type="similarity">
    <text evidence="3">Belongs to the AlgX family.</text>
</comment>
<proteinExistence type="inferred from homology"/>
<gene>
    <name type="primary">algX</name>
</gene>
<accession>O52194</accession>
<evidence type="ECO:0000250" key="1"/>
<evidence type="ECO:0000255" key="2"/>
<evidence type="ECO:0000305" key="3"/>
<organism>
    <name type="scientific">Azotobacter vinelandii</name>
    <dbReference type="NCBI Taxonomy" id="354"/>
    <lineage>
        <taxon>Bacteria</taxon>
        <taxon>Pseudomonadati</taxon>
        <taxon>Pseudomonadota</taxon>
        <taxon>Gammaproteobacteria</taxon>
        <taxon>Pseudomonadales</taxon>
        <taxon>Pseudomonadaceae</taxon>
        <taxon>Azotobacter</taxon>
    </lineage>
</organism>
<reference key="1">
    <citation type="journal article" date="1999" name="Gene">
        <title>Transcriptional organization of the Azotobacter vinelandii algGXLVIFA genes: characterization of algF mutants.</title>
        <authorList>
            <person name="Vazquez-Ramos A."/>
            <person name="Moreno S."/>
            <person name="Guzman J."/>
            <person name="Alvarado A."/>
            <person name="Espin G."/>
        </authorList>
    </citation>
    <scope>NUCLEOTIDE SEQUENCE [GENOMIC DNA]</scope>
    <source>
        <strain>ATCC 9046</strain>
    </source>
</reference>
<feature type="signal peptide" evidence="2">
    <location>
        <begin position="1"/>
        <end position="27"/>
    </location>
</feature>
<feature type="chain" id="PRO_0000020670" description="Alginate biosynthesis protein AlgX">
    <location>
        <begin position="28"/>
        <end position="483"/>
    </location>
</feature>
<feature type="region of interest" description="SGNH hydrolase-like domain">
    <location>
        <begin position="27"/>
        <end position="349"/>
    </location>
</feature>
<feature type="region of interest" description="CBM domain">
    <location>
        <begin position="350"/>
        <end position="480"/>
    </location>
</feature>
<feature type="active site" evidence="1">
    <location>
        <position position="177"/>
    </location>
</feature>
<feature type="active site" description="Proton acceptor" evidence="1">
    <location>
        <position position="179"/>
    </location>
</feature>
<feature type="active site" description="Nucleophile" evidence="1">
    <location>
        <position position="271"/>
    </location>
</feature>
<feature type="disulfide bond" evidence="1">
    <location>
        <begin position="46"/>
        <end position="232"/>
    </location>
</feature>
<feature type="disulfide bond" evidence="1">
    <location>
        <begin position="349"/>
        <end position="466"/>
    </location>
</feature>
<dbReference type="EC" id="2.3.1.-"/>
<dbReference type="EMBL" id="AF027499">
    <property type="protein sequence ID" value="AAC04566.1"/>
    <property type="molecule type" value="Genomic_DNA"/>
</dbReference>
<dbReference type="SMR" id="O52194"/>
<dbReference type="UniPathway" id="UPA00286"/>
<dbReference type="GO" id="GO:0042597">
    <property type="term" value="C:periplasmic space"/>
    <property type="evidence" value="ECO:0007669"/>
    <property type="project" value="UniProtKB-SubCell"/>
</dbReference>
<dbReference type="GO" id="GO:0016746">
    <property type="term" value="F:acyltransferase activity"/>
    <property type="evidence" value="ECO:0007669"/>
    <property type="project" value="UniProtKB-KW"/>
</dbReference>
<dbReference type="GO" id="GO:0042121">
    <property type="term" value="P:alginic acid biosynthetic process"/>
    <property type="evidence" value="ECO:0007669"/>
    <property type="project" value="UniProtKB-UniPathway"/>
</dbReference>
<dbReference type="CDD" id="cd14487">
    <property type="entry name" value="AlgX_C"/>
    <property type="match status" value="1"/>
</dbReference>
<dbReference type="CDD" id="cd14441">
    <property type="entry name" value="AlgX_N"/>
    <property type="match status" value="1"/>
</dbReference>
<dbReference type="Gene3D" id="2.60.120.1380">
    <property type="entry name" value="C-terminal carbohydrate-binding module"/>
    <property type="match status" value="1"/>
</dbReference>
<dbReference type="InterPro" id="IPR031811">
    <property type="entry name" value="ALGX/ALGJ_SGNH-like"/>
</dbReference>
<dbReference type="InterPro" id="IPR031798">
    <property type="entry name" value="AlgX_C"/>
</dbReference>
<dbReference type="InterPro" id="IPR038639">
    <property type="entry name" value="AlgX_C_sf"/>
</dbReference>
<dbReference type="InterPro" id="IPR034655">
    <property type="entry name" value="AlgX_N"/>
</dbReference>
<dbReference type="Pfam" id="PF16822">
    <property type="entry name" value="ALGX"/>
    <property type="match status" value="1"/>
</dbReference>
<dbReference type="Pfam" id="PF16824">
    <property type="entry name" value="CBM_26"/>
    <property type="match status" value="1"/>
</dbReference>
<name>ALGX_AZOVI</name>
<sequence length="483" mass="53996">MKTHNSKWIGPAALAAAIALAAAGVRAEETPTGLPVYRAESCCDLCPAAADPNSYTSNYMKGFVTLVQGNESDWLFRTNEDLRTEFGTTPEGYRQLKALHDAFKSRGVELVIVYQPTRGMVQRNKLLPADYARFDYDKAVRNFRATLKHFEQLGYWVPDLTPLTDEKVEPAFYFRGDHHWTSYGAERSARIVAETVKEIPAFADIPRKEFVTKKMGRMGKRGTHHRVAGQLCNTTYAFEHSDQFFTEPKGEGGGDLFGDSSLPQITLVGTSHSGTNYNFAGFLSEYMGAEILNVAFPGSGLEGSMLKYLASDEFQKNPPKILIWEFSPLYDLAEDKFYRQALSMLGNACEGEKTLLAGKATLRPGEAGKEVLINGAGRLVEATNSRHQVDIRFSDPSVKKLEGTIWYMTGRREKFQFDKPVTTETNGRFAFNMRDEADWGGLNFFAMEIQPPEGLKEPVEVEVRLCKRHDYHAPANLTARSGN</sequence>
<protein>
    <recommendedName>
        <fullName>Alginate biosynthesis protein AlgX</fullName>
    </recommendedName>
    <alternativeName>
        <fullName>Probable alginate O-acetyltransferase AlgX</fullName>
        <ecNumber>2.3.1.-</ecNumber>
    </alternativeName>
</protein>